<protein>
    <recommendedName>
        <fullName evidence="3">Riboflavin transporter</fullName>
    </recommendedName>
</protein>
<feature type="chain" id="PRO_0000424626" description="Riboflavin transporter">
    <location>
        <begin position="1"/>
        <end position="302"/>
    </location>
</feature>
<feature type="transmembrane region" description="Helical" evidence="1">
    <location>
        <begin position="16"/>
        <end position="36"/>
    </location>
</feature>
<feature type="transmembrane region" description="Helical" evidence="1">
    <location>
        <begin position="44"/>
        <end position="64"/>
    </location>
</feature>
<feature type="transmembrane region" description="Helical" evidence="1">
    <location>
        <begin position="87"/>
        <end position="107"/>
    </location>
</feature>
<feature type="transmembrane region" description="Helical" evidence="1">
    <location>
        <begin position="109"/>
        <end position="129"/>
    </location>
</feature>
<feature type="transmembrane region" description="Helical" evidence="1">
    <location>
        <begin position="158"/>
        <end position="178"/>
    </location>
</feature>
<feature type="transmembrane region" description="Helical" evidence="1">
    <location>
        <begin position="191"/>
        <end position="213"/>
    </location>
</feature>
<feature type="transmembrane region" description="Helical" evidence="1">
    <location>
        <begin position="227"/>
        <end position="247"/>
    </location>
</feature>
<feature type="transmembrane region" description="Helical" evidence="1">
    <location>
        <begin position="264"/>
        <end position="284"/>
    </location>
</feature>
<feature type="domain" description="EamA 1">
    <location>
        <begin position="30"/>
        <end position="151"/>
    </location>
</feature>
<feature type="domain" description="EamA 2">
    <location>
        <begin position="170"/>
        <end position="291"/>
    </location>
</feature>
<comment type="function">
    <text evidence="2">Transports riboflavin into the cell. Can also transport FMN and FAD. Required for normal nodule development during colonization of pea plant roots.</text>
</comment>
<comment type="subcellular location">
    <subcellularLocation>
        <location evidence="2">Cell membrane</location>
        <topology evidence="2">Multi-pass membrane protein</topology>
    </subcellularLocation>
</comment>
<comment type="induction">
    <text evidence="2">Negatively regulated by riboflavin, probably via an FMN riboswitch.</text>
</comment>
<comment type="similarity">
    <text evidence="4">Belongs to the drug/metabolite transporter (DMT) superfamily. 10 TMS drug/metabolite exporter (DME) (TC 2.A.7.3) family.</text>
</comment>
<dbReference type="EMBL" id="AM236080">
    <property type="protein sequence ID" value="CAK07187.1"/>
    <property type="molecule type" value="Genomic_DNA"/>
</dbReference>
<dbReference type="SMR" id="Q1MIM3"/>
<dbReference type="TCDB" id="2.A.7.3.54">
    <property type="family name" value="the drug/metabolite transporter (dmt) superfamily"/>
</dbReference>
<dbReference type="EnsemblBacteria" id="CAK07187">
    <property type="protein sequence ID" value="CAK07187"/>
    <property type="gene ID" value="RL1692"/>
</dbReference>
<dbReference type="KEGG" id="rle:RL1692"/>
<dbReference type="eggNOG" id="COG0697">
    <property type="taxonomic scope" value="Bacteria"/>
</dbReference>
<dbReference type="HOGENOM" id="CLU_032828_0_0_5"/>
<dbReference type="Proteomes" id="UP000006575">
    <property type="component" value="Chromosome"/>
</dbReference>
<dbReference type="GO" id="GO:0005886">
    <property type="term" value="C:plasma membrane"/>
    <property type="evidence" value="ECO:0007669"/>
    <property type="project" value="UniProtKB-SubCell"/>
</dbReference>
<dbReference type="InterPro" id="IPR000620">
    <property type="entry name" value="EamA_dom"/>
</dbReference>
<dbReference type="PANTHER" id="PTHR22911">
    <property type="entry name" value="ACYL-MALONYL CONDENSING ENZYME-RELATED"/>
    <property type="match status" value="1"/>
</dbReference>
<dbReference type="PANTHER" id="PTHR22911:SF6">
    <property type="entry name" value="SOLUTE CARRIER FAMILY 35 MEMBER G1"/>
    <property type="match status" value="1"/>
</dbReference>
<dbReference type="Pfam" id="PF00892">
    <property type="entry name" value="EamA"/>
    <property type="match status" value="1"/>
</dbReference>
<dbReference type="SUPFAM" id="SSF103481">
    <property type="entry name" value="Multidrug resistance efflux transporter EmrE"/>
    <property type="match status" value="2"/>
</dbReference>
<name>RIBN_RHIJ3</name>
<accession>Q1MIM3</accession>
<sequence length="302" mass="32511">MKDMNQTSLAVEPSRAVVGALWMVLAGIAFSLLNVVTQWLTMKLAFPSASAAFWQYGFAFLFSLPFLKRLGLAAMRTHYPWRHLTRVVLAALGVEAWVAGLAAVPIWQAIALVMTSPFFIILGARLFLGERVGPARWAATAAGFTGAMIILQPWSDGIGWAALLPVLSALLWGASSLITKSLTGIERPETITVWLLVLLTPINGGLALAAGFAVPTGATLALFLLAGLLTAVAQYFLTLAYAAADAAYVQPFDDLKLPLNVLAGWLFFGYAPAGYLWLGAALILSASLFIMRNEMRRERKPA</sequence>
<gene>
    <name evidence="3" type="primary">ribN</name>
    <name type="ordered locus">RL1692</name>
</gene>
<reference key="1">
    <citation type="journal article" date="2006" name="Genome Biol.">
        <title>The genome of Rhizobium leguminosarum has recognizable core and accessory components.</title>
        <authorList>
            <person name="Young J.P.W."/>
            <person name="Crossman L.C."/>
            <person name="Johnston A.W.B."/>
            <person name="Thomson N.R."/>
            <person name="Ghazoui Z.F."/>
            <person name="Hull K.H."/>
            <person name="Wexler M."/>
            <person name="Curson A.R.J."/>
            <person name="Todd J.D."/>
            <person name="Poole P.S."/>
            <person name="Mauchline T.H."/>
            <person name="East A.K."/>
            <person name="Quail M.A."/>
            <person name="Churcher C."/>
            <person name="Arrowsmith C."/>
            <person name="Cherevach I."/>
            <person name="Chillingworth T."/>
            <person name="Clarke K."/>
            <person name="Cronin A."/>
            <person name="Davis P."/>
            <person name="Fraser A."/>
            <person name="Hance Z."/>
            <person name="Hauser H."/>
            <person name="Jagels K."/>
            <person name="Moule S."/>
            <person name="Mungall K."/>
            <person name="Norbertczak H."/>
            <person name="Rabbinowitsch E."/>
            <person name="Sanders M."/>
            <person name="Simmonds M."/>
            <person name="Whitehead S."/>
            <person name="Parkhill J."/>
        </authorList>
    </citation>
    <scope>NUCLEOTIDE SEQUENCE [LARGE SCALE GENOMIC DNA]</scope>
    <source>
        <strain>DSM 114642 / LMG 32736 / 3841</strain>
    </source>
</reference>
<reference key="2">
    <citation type="journal article" date="2013" name="J. Bacteriol.">
        <title>Identification and characterization of RibN, a novel family of riboflavin transporters from Rhizobium leguminosarum and other Proteobacteria.</title>
        <authorList>
            <person name="Garcia Angulo V.A."/>
            <person name="Bonomi H.R."/>
            <person name="Posadas D.M."/>
            <person name="Serer M.I."/>
            <person name="Torres A.G."/>
            <person name="Zorreguieta A."/>
            <person name="Goldbaum F.A."/>
        </authorList>
    </citation>
    <scope>FUNCTION AS A TRANSPORTER</scope>
    <scope>SUBCELLULAR LOCATION</scope>
    <scope>INDUCTION</scope>
    <scope>GENE NAME</scope>
    <source>
        <strain>DSM 114642 / LMG 32736 / 3841</strain>
    </source>
</reference>
<evidence type="ECO:0000255" key="1"/>
<evidence type="ECO:0000269" key="2">
    <source>
    </source>
</evidence>
<evidence type="ECO:0000303" key="3">
    <source>
    </source>
</evidence>
<evidence type="ECO:0000305" key="4"/>
<proteinExistence type="evidence at protein level"/>
<organism>
    <name type="scientific">Rhizobium johnstonii (strain DSM 114642 / LMG 32736 / 3841)</name>
    <name type="common">Rhizobium leguminosarum bv. viciae</name>
    <dbReference type="NCBI Taxonomy" id="216596"/>
    <lineage>
        <taxon>Bacteria</taxon>
        <taxon>Pseudomonadati</taxon>
        <taxon>Pseudomonadota</taxon>
        <taxon>Alphaproteobacteria</taxon>
        <taxon>Hyphomicrobiales</taxon>
        <taxon>Rhizobiaceae</taxon>
        <taxon>Rhizobium/Agrobacterium group</taxon>
        <taxon>Rhizobium</taxon>
        <taxon>Rhizobium johnstonii</taxon>
    </lineage>
</organism>
<keyword id="KW-1003">Cell membrane</keyword>
<keyword id="KW-0472">Membrane</keyword>
<keyword id="KW-0677">Repeat</keyword>
<keyword id="KW-0812">Transmembrane</keyword>
<keyword id="KW-1133">Transmembrane helix</keyword>
<keyword id="KW-0813">Transport</keyword>